<organism>
    <name type="scientific">Homo sapiens</name>
    <name type="common">Human</name>
    <dbReference type="NCBI Taxonomy" id="9606"/>
    <lineage>
        <taxon>Eukaryota</taxon>
        <taxon>Metazoa</taxon>
        <taxon>Chordata</taxon>
        <taxon>Craniata</taxon>
        <taxon>Vertebrata</taxon>
        <taxon>Euteleostomi</taxon>
        <taxon>Mammalia</taxon>
        <taxon>Eutheria</taxon>
        <taxon>Euarchontoglires</taxon>
        <taxon>Primates</taxon>
        <taxon>Haplorrhini</taxon>
        <taxon>Catarrhini</taxon>
        <taxon>Hominidae</taxon>
        <taxon>Homo</taxon>
    </lineage>
</organism>
<reference key="1">
    <citation type="journal article" date="1999" name="Genomics">
        <title>Human cerberus related gene CER1 maps to chromosome 9.</title>
        <authorList>
            <person name="Lah M."/>
            <person name="Brodnicki T."/>
            <person name="Maccarone P."/>
            <person name="Nash A."/>
            <person name="Stanley E."/>
            <person name="Harvey R.P."/>
        </authorList>
    </citation>
    <scope>NUCLEOTIDE SEQUENCE [MRNA]</scope>
    <source>
        <tissue>Blood</tissue>
    </source>
</reference>
<reference key="2">
    <citation type="submission" date="2001-07" db="EMBL/GenBank/DDBJ databases">
        <authorList>
            <person name="Feng Z."/>
            <person name="Zhang B."/>
            <person name="Peng X."/>
            <person name="Yuan J."/>
            <person name="Qiang B."/>
        </authorList>
    </citation>
    <scope>NUCLEOTIDE SEQUENCE [MRNA]</scope>
</reference>
<reference key="3">
    <citation type="journal article" date="2004" name="Nature">
        <title>DNA sequence and analysis of human chromosome 9.</title>
        <authorList>
            <person name="Humphray S.J."/>
            <person name="Oliver K."/>
            <person name="Hunt A.R."/>
            <person name="Plumb R.W."/>
            <person name="Loveland J.E."/>
            <person name="Howe K.L."/>
            <person name="Andrews T.D."/>
            <person name="Searle S."/>
            <person name="Hunt S.E."/>
            <person name="Scott C.E."/>
            <person name="Jones M.C."/>
            <person name="Ainscough R."/>
            <person name="Almeida J.P."/>
            <person name="Ambrose K.D."/>
            <person name="Ashwell R.I.S."/>
            <person name="Babbage A.K."/>
            <person name="Babbage S."/>
            <person name="Bagguley C.L."/>
            <person name="Bailey J."/>
            <person name="Banerjee R."/>
            <person name="Barker D.J."/>
            <person name="Barlow K.F."/>
            <person name="Bates K."/>
            <person name="Beasley H."/>
            <person name="Beasley O."/>
            <person name="Bird C.P."/>
            <person name="Bray-Allen S."/>
            <person name="Brown A.J."/>
            <person name="Brown J.Y."/>
            <person name="Burford D."/>
            <person name="Burrill W."/>
            <person name="Burton J."/>
            <person name="Carder C."/>
            <person name="Carter N.P."/>
            <person name="Chapman J.C."/>
            <person name="Chen Y."/>
            <person name="Clarke G."/>
            <person name="Clark S.Y."/>
            <person name="Clee C.M."/>
            <person name="Clegg S."/>
            <person name="Collier R.E."/>
            <person name="Corby N."/>
            <person name="Crosier M."/>
            <person name="Cummings A.T."/>
            <person name="Davies J."/>
            <person name="Dhami P."/>
            <person name="Dunn M."/>
            <person name="Dutta I."/>
            <person name="Dyer L.W."/>
            <person name="Earthrowl M.E."/>
            <person name="Faulkner L."/>
            <person name="Fleming C.J."/>
            <person name="Frankish A."/>
            <person name="Frankland J.A."/>
            <person name="French L."/>
            <person name="Fricker D.G."/>
            <person name="Garner P."/>
            <person name="Garnett J."/>
            <person name="Ghori J."/>
            <person name="Gilbert J.G.R."/>
            <person name="Glison C."/>
            <person name="Grafham D.V."/>
            <person name="Gribble S."/>
            <person name="Griffiths C."/>
            <person name="Griffiths-Jones S."/>
            <person name="Grocock R."/>
            <person name="Guy J."/>
            <person name="Hall R.E."/>
            <person name="Hammond S."/>
            <person name="Harley J.L."/>
            <person name="Harrison E.S.I."/>
            <person name="Hart E.A."/>
            <person name="Heath P.D."/>
            <person name="Henderson C.D."/>
            <person name="Hopkins B.L."/>
            <person name="Howard P.J."/>
            <person name="Howden P.J."/>
            <person name="Huckle E."/>
            <person name="Johnson C."/>
            <person name="Johnson D."/>
            <person name="Joy A.A."/>
            <person name="Kay M."/>
            <person name="Keenan S."/>
            <person name="Kershaw J.K."/>
            <person name="Kimberley A.M."/>
            <person name="King A."/>
            <person name="Knights A."/>
            <person name="Laird G.K."/>
            <person name="Langford C."/>
            <person name="Lawlor S."/>
            <person name="Leongamornlert D.A."/>
            <person name="Leversha M."/>
            <person name="Lloyd C."/>
            <person name="Lloyd D.M."/>
            <person name="Lovell J."/>
            <person name="Martin S."/>
            <person name="Mashreghi-Mohammadi M."/>
            <person name="Matthews L."/>
            <person name="McLaren S."/>
            <person name="McLay K.E."/>
            <person name="McMurray A."/>
            <person name="Milne S."/>
            <person name="Nickerson T."/>
            <person name="Nisbett J."/>
            <person name="Nordsiek G."/>
            <person name="Pearce A.V."/>
            <person name="Peck A.I."/>
            <person name="Porter K.M."/>
            <person name="Pandian R."/>
            <person name="Pelan S."/>
            <person name="Phillimore B."/>
            <person name="Povey S."/>
            <person name="Ramsey Y."/>
            <person name="Rand V."/>
            <person name="Scharfe M."/>
            <person name="Sehra H.K."/>
            <person name="Shownkeen R."/>
            <person name="Sims S.K."/>
            <person name="Skuce C.D."/>
            <person name="Smith M."/>
            <person name="Steward C.A."/>
            <person name="Swarbreck D."/>
            <person name="Sycamore N."/>
            <person name="Tester J."/>
            <person name="Thorpe A."/>
            <person name="Tracey A."/>
            <person name="Tromans A."/>
            <person name="Thomas D.W."/>
            <person name="Wall M."/>
            <person name="Wallis J.M."/>
            <person name="West A.P."/>
            <person name="Whitehead S.L."/>
            <person name="Willey D.L."/>
            <person name="Williams S.A."/>
            <person name="Wilming L."/>
            <person name="Wray P.W."/>
            <person name="Young L."/>
            <person name="Ashurst J.L."/>
            <person name="Coulson A."/>
            <person name="Blocker H."/>
            <person name="Durbin R.M."/>
            <person name="Sulston J.E."/>
            <person name="Hubbard T."/>
            <person name="Jackson M.J."/>
            <person name="Bentley D.R."/>
            <person name="Beck S."/>
            <person name="Rogers J."/>
            <person name="Dunham I."/>
        </authorList>
    </citation>
    <scope>NUCLEOTIDE SEQUENCE [LARGE SCALE GENOMIC DNA]</scope>
</reference>
<reference key="4">
    <citation type="journal article" date="2004" name="Genome Res.">
        <title>The status, quality, and expansion of the NIH full-length cDNA project: the Mammalian Gene Collection (MGC).</title>
        <authorList>
            <consortium name="The MGC Project Team"/>
        </authorList>
    </citation>
    <scope>NUCLEOTIDE SEQUENCE [LARGE SCALE MRNA]</scope>
    <scope>VARIANTS TRP-19; GLY-65 AND ILE-179</scope>
</reference>
<reference key="5">
    <citation type="journal article" date="2004" name="Protein Sci.">
        <title>Signal peptide prediction based on analysis of experimentally verified cleavage sites.</title>
        <authorList>
            <person name="Zhang Z."/>
            <person name="Henzel W.J."/>
        </authorList>
    </citation>
    <scope>PROTEIN SEQUENCE OF 18-32</scope>
</reference>
<evidence type="ECO:0000250" key="1"/>
<evidence type="ECO:0000255" key="2"/>
<evidence type="ECO:0000255" key="3">
    <source>
        <dbReference type="PROSITE-ProRule" id="PRU00039"/>
    </source>
</evidence>
<evidence type="ECO:0000256" key="4">
    <source>
        <dbReference type="SAM" id="MobiDB-lite"/>
    </source>
</evidence>
<evidence type="ECO:0000269" key="5">
    <source>
    </source>
</evidence>
<evidence type="ECO:0000269" key="6">
    <source>
    </source>
</evidence>
<evidence type="ECO:0000305" key="7"/>
<protein>
    <recommendedName>
        <fullName>Cerberus</fullName>
    </recommendedName>
    <alternativeName>
        <fullName>Cerberus-related protein</fullName>
    </alternativeName>
    <alternativeName>
        <fullName>DAN domain family member 4</fullName>
    </alternativeName>
</protein>
<keyword id="KW-0202">Cytokine</keyword>
<keyword id="KW-0903">Direct protein sequencing</keyword>
<keyword id="KW-1015">Disulfide bond</keyword>
<keyword id="KW-0325">Glycoprotein</keyword>
<keyword id="KW-1267">Proteomics identification</keyword>
<keyword id="KW-1185">Reference proteome</keyword>
<keyword id="KW-0964">Secreted</keyword>
<keyword id="KW-0732">Signal</keyword>
<gene>
    <name type="primary">CER1</name>
    <name type="synonym">DAND4</name>
</gene>
<dbReference type="EMBL" id="AF090189">
    <property type="protein sequence ID" value="AAD19879.1"/>
    <property type="molecule type" value="Genomic_DNA"/>
</dbReference>
<dbReference type="EMBL" id="AF400435">
    <property type="protein sequence ID" value="AAK92484.1"/>
    <property type="molecule type" value="mRNA"/>
</dbReference>
<dbReference type="EMBL" id="AL390732">
    <property type="status" value="NOT_ANNOTATED_CDS"/>
    <property type="molecule type" value="Genomic_DNA"/>
</dbReference>
<dbReference type="EMBL" id="BC069371">
    <property type="protein sequence ID" value="AAH69371.1"/>
    <property type="molecule type" value="mRNA"/>
</dbReference>
<dbReference type="EMBL" id="BC069405">
    <property type="protein sequence ID" value="AAH69405.1"/>
    <property type="molecule type" value="mRNA"/>
</dbReference>
<dbReference type="EMBL" id="BC069491">
    <property type="protein sequence ID" value="AAH69491.1"/>
    <property type="molecule type" value="mRNA"/>
</dbReference>
<dbReference type="EMBL" id="BC069503">
    <property type="protein sequence ID" value="AAH69503.1"/>
    <property type="status" value="ALT_SEQ"/>
    <property type="molecule type" value="mRNA"/>
</dbReference>
<dbReference type="CCDS" id="CCDS6476.1"/>
<dbReference type="RefSeq" id="NP_005445.1">
    <property type="nucleotide sequence ID" value="NM_005454.3"/>
</dbReference>
<dbReference type="SMR" id="O95813"/>
<dbReference type="BioGRID" id="114753">
    <property type="interactions" value="17"/>
</dbReference>
<dbReference type="FunCoup" id="O95813">
    <property type="interactions" value="320"/>
</dbReference>
<dbReference type="IntAct" id="O95813">
    <property type="interactions" value="11"/>
</dbReference>
<dbReference type="STRING" id="9606.ENSP00000370297"/>
<dbReference type="GlyCosmos" id="O95813">
    <property type="glycosylation" value="2 sites, No reported glycans"/>
</dbReference>
<dbReference type="GlyGen" id="O95813">
    <property type="glycosylation" value="2 sites"/>
</dbReference>
<dbReference type="iPTMnet" id="O95813"/>
<dbReference type="PhosphoSitePlus" id="O95813"/>
<dbReference type="BioMuta" id="CER1"/>
<dbReference type="jPOST" id="O95813"/>
<dbReference type="MassIVE" id="O95813"/>
<dbReference type="PaxDb" id="9606-ENSP00000370297"/>
<dbReference type="PeptideAtlas" id="O95813"/>
<dbReference type="ProteomicsDB" id="51063"/>
<dbReference type="Antibodypedia" id="10019">
    <property type="antibodies" value="265 antibodies from 31 providers"/>
</dbReference>
<dbReference type="DNASU" id="9350"/>
<dbReference type="Ensembl" id="ENST00000380911.4">
    <property type="protein sequence ID" value="ENSP00000370297.3"/>
    <property type="gene ID" value="ENSG00000147869.5"/>
</dbReference>
<dbReference type="GeneID" id="9350"/>
<dbReference type="KEGG" id="hsa:9350"/>
<dbReference type="MANE-Select" id="ENST00000380911.4">
    <property type="protein sequence ID" value="ENSP00000370297.3"/>
    <property type="RefSeq nucleotide sequence ID" value="NM_005454.3"/>
    <property type="RefSeq protein sequence ID" value="NP_005445.1"/>
</dbReference>
<dbReference type="UCSC" id="uc003zlj.4">
    <property type="organism name" value="human"/>
</dbReference>
<dbReference type="AGR" id="HGNC:1862"/>
<dbReference type="CTD" id="9350"/>
<dbReference type="DisGeNET" id="9350"/>
<dbReference type="GeneCards" id="CER1"/>
<dbReference type="HGNC" id="HGNC:1862">
    <property type="gene designation" value="CER1"/>
</dbReference>
<dbReference type="HPA" id="ENSG00000147869">
    <property type="expression patterns" value="Tissue enhanced (epididymis)"/>
</dbReference>
<dbReference type="MIM" id="603777">
    <property type="type" value="gene"/>
</dbReference>
<dbReference type="neXtProt" id="NX_O95813"/>
<dbReference type="OpenTargets" id="ENSG00000147869"/>
<dbReference type="PharmGKB" id="PA26417"/>
<dbReference type="VEuPathDB" id="HostDB:ENSG00000147869"/>
<dbReference type="eggNOG" id="ENOG502S2G4">
    <property type="taxonomic scope" value="Eukaryota"/>
</dbReference>
<dbReference type="GeneTree" id="ENSGT00530000063926"/>
<dbReference type="HOGENOM" id="CLU_104447_0_0_1"/>
<dbReference type="InParanoid" id="O95813"/>
<dbReference type="OMA" id="KKFWDHF"/>
<dbReference type="OrthoDB" id="9950584at2759"/>
<dbReference type="PAN-GO" id="O95813">
    <property type="GO annotations" value="6 GO annotations based on evolutionary models"/>
</dbReference>
<dbReference type="PhylomeDB" id="O95813"/>
<dbReference type="TreeFam" id="TF106445"/>
<dbReference type="PathwayCommons" id="O95813"/>
<dbReference type="Reactome" id="R-HSA-1181150">
    <property type="pathway name" value="Signaling by NODAL"/>
</dbReference>
<dbReference type="Reactome" id="R-HSA-1433617">
    <property type="pathway name" value="Regulation of signaling by NODAL"/>
</dbReference>
<dbReference type="Reactome" id="R-HSA-201451">
    <property type="pathway name" value="Signaling by BMP"/>
</dbReference>
<dbReference type="Reactome" id="R-HSA-9925561">
    <property type="pathway name" value="Developmental Lineage of Pancreatic Acinar Cells"/>
</dbReference>
<dbReference type="SignaLink" id="O95813"/>
<dbReference type="BioGRID-ORCS" id="9350">
    <property type="hits" value="12 hits in 1132 CRISPR screens"/>
</dbReference>
<dbReference type="GeneWiki" id="Cerberus_(protein)"/>
<dbReference type="GenomeRNAi" id="9350"/>
<dbReference type="Pharos" id="O95813">
    <property type="development level" value="Tbio"/>
</dbReference>
<dbReference type="PRO" id="PR:O95813"/>
<dbReference type="Proteomes" id="UP000005640">
    <property type="component" value="Chromosome 9"/>
</dbReference>
<dbReference type="RNAct" id="O95813">
    <property type="molecule type" value="protein"/>
</dbReference>
<dbReference type="Bgee" id="ENSG00000147869">
    <property type="expression patterns" value="Expressed in primordial germ cell in gonad and 39 other cell types or tissues"/>
</dbReference>
<dbReference type="GO" id="GO:0005576">
    <property type="term" value="C:extracellular region"/>
    <property type="evidence" value="ECO:0000250"/>
    <property type="project" value="BHF-UCL"/>
</dbReference>
<dbReference type="GO" id="GO:0005615">
    <property type="term" value="C:extracellular space"/>
    <property type="evidence" value="ECO:0000250"/>
    <property type="project" value="BHF-UCL"/>
</dbReference>
<dbReference type="GO" id="GO:0036122">
    <property type="term" value="F:BMP binding"/>
    <property type="evidence" value="ECO:0000314"/>
    <property type="project" value="BHF-UCL"/>
</dbReference>
<dbReference type="GO" id="GO:0005125">
    <property type="term" value="F:cytokine activity"/>
    <property type="evidence" value="ECO:0007669"/>
    <property type="project" value="UniProtKB-KW"/>
</dbReference>
<dbReference type="GO" id="GO:0016015">
    <property type="term" value="F:morphogen activity"/>
    <property type="evidence" value="ECO:0000314"/>
    <property type="project" value="BHF-UCL"/>
</dbReference>
<dbReference type="GO" id="GO:0042803">
    <property type="term" value="F:protein homodimerization activity"/>
    <property type="evidence" value="ECO:0000250"/>
    <property type="project" value="BHF-UCL"/>
</dbReference>
<dbReference type="GO" id="GO:0009948">
    <property type="term" value="P:anterior/posterior axis specification"/>
    <property type="evidence" value="ECO:0000250"/>
    <property type="project" value="BHF-UCL"/>
</dbReference>
<dbReference type="GO" id="GO:0009952">
    <property type="term" value="P:anterior/posterior pattern specification"/>
    <property type="evidence" value="ECO:0000250"/>
    <property type="project" value="BHF-UCL"/>
</dbReference>
<dbReference type="GO" id="GO:0030282">
    <property type="term" value="P:bone mineralization"/>
    <property type="evidence" value="ECO:0000315"/>
    <property type="project" value="BHF-UCL"/>
</dbReference>
<dbReference type="GO" id="GO:0042074">
    <property type="term" value="P:cell migration involved in gastrulation"/>
    <property type="evidence" value="ECO:0000250"/>
    <property type="project" value="BHF-UCL"/>
</dbReference>
<dbReference type="GO" id="GO:0071276">
    <property type="term" value="P:cellular response to cadmium ion"/>
    <property type="evidence" value="ECO:0007669"/>
    <property type="project" value="Ensembl"/>
</dbReference>
<dbReference type="GO" id="GO:0048263">
    <property type="term" value="P:determination of dorsal identity"/>
    <property type="evidence" value="ECO:0000315"/>
    <property type="project" value="BHF-UCL"/>
</dbReference>
<dbReference type="GO" id="GO:0061371">
    <property type="term" value="P:determination of heart left/right asymmetry"/>
    <property type="evidence" value="ECO:0000318"/>
    <property type="project" value="GO_Central"/>
</dbReference>
<dbReference type="GO" id="GO:0007369">
    <property type="term" value="P:gastrulation"/>
    <property type="evidence" value="ECO:0000250"/>
    <property type="project" value="BHF-UCL"/>
</dbReference>
<dbReference type="GO" id="GO:0003419">
    <property type="term" value="P:growth plate cartilage chondrocyte proliferation"/>
    <property type="evidence" value="ECO:0000250"/>
    <property type="project" value="BHF-UCL"/>
</dbReference>
<dbReference type="GO" id="GO:0032926">
    <property type="term" value="P:negative regulation of activin receptor signaling pathway"/>
    <property type="evidence" value="ECO:0000314"/>
    <property type="project" value="BHF-UCL"/>
</dbReference>
<dbReference type="GO" id="GO:0030514">
    <property type="term" value="P:negative regulation of BMP signaling pathway"/>
    <property type="evidence" value="ECO:0000250"/>
    <property type="project" value="BHF-UCL"/>
</dbReference>
<dbReference type="GO" id="GO:0008285">
    <property type="term" value="P:negative regulation of cell population proliferation"/>
    <property type="evidence" value="ECO:0000250"/>
    <property type="project" value="BHF-UCL"/>
</dbReference>
<dbReference type="GO" id="GO:2000381">
    <property type="term" value="P:negative regulation of mesoderm development"/>
    <property type="evidence" value="ECO:0000315"/>
    <property type="project" value="BHF-UCL"/>
</dbReference>
<dbReference type="GO" id="GO:0007399">
    <property type="term" value="P:nervous system development"/>
    <property type="evidence" value="ECO:0000315"/>
    <property type="project" value="BHF-UCL"/>
</dbReference>
<dbReference type="GO" id="GO:0035582">
    <property type="term" value="P:sequestering of BMP in extracellular matrix"/>
    <property type="evidence" value="ECO:0000314"/>
    <property type="project" value="BHF-UCL"/>
</dbReference>
<dbReference type="GO" id="GO:0023019">
    <property type="term" value="P:signal transduction involved in regulation of gene expression"/>
    <property type="evidence" value="ECO:0000250"/>
    <property type="project" value="BHF-UCL"/>
</dbReference>
<dbReference type="GO" id="GO:0001657">
    <property type="term" value="P:ureteric bud development"/>
    <property type="evidence" value="ECO:0000250"/>
    <property type="project" value="UniProtKB"/>
</dbReference>
<dbReference type="FunFam" id="2.10.90.10:FF:000042">
    <property type="entry name" value="Cerberus 1 homolog (Xenopus laevis)"/>
    <property type="match status" value="1"/>
</dbReference>
<dbReference type="Gene3D" id="2.10.90.10">
    <property type="entry name" value="Cystine-knot cytokines"/>
    <property type="match status" value="1"/>
</dbReference>
<dbReference type="InterPro" id="IPR016860">
    <property type="entry name" value="Cerberus"/>
</dbReference>
<dbReference type="InterPro" id="IPR006207">
    <property type="entry name" value="Cys_knot_C"/>
</dbReference>
<dbReference type="InterPro" id="IPR029034">
    <property type="entry name" value="Cystine-knot_cytokine"/>
</dbReference>
<dbReference type="InterPro" id="IPR004133">
    <property type="entry name" value="DAN"/>
</dbReference>
<dbReference type="PANTHER" id="PTHR15273:SF4">
    <property type="entry name" value="CERBERUS"/>
    <property type="match status" value="1"/>
</dbReference>
<dbReference type="PANTHER" id="PTHR15273">
    <property type="entry name" value="DAN DOMAIN FAMILY MEMBER 5"/>
    <property type="match status" value="1"/>
</dbReference>
<dbReference type="Pfam" id="PF03045">
    <property type="entry name" value="DAN"/>
    <property type="match status" value="1"/>
</dbReference>
<dbReference type="PIRSF" id="PIRSF027807">
    <property type="entry name" value="Cerberus"/>
    <property type="match status" value="1"/>
</dbReference>
<dbReference type="SMART" id="SM00041">
    <property type="entry name" value="CT"/>
    <property type="match status" value="1"/>
</dbReference>
<dbReference type="PROSITE" id="PS01225">
    <property type="entry name" value="CTCK_2"/>
    <property type="match status" value="1"/>
</dbReference>
<feature type="signal peptide" evidence="5">
    <location>
        <begin position="1"/>
        <end position="17"/>
    </location>
</feature>
<feature type="chain" id="PRO_0000006711" description="Cerberus">
    <location>
        <begin position="18"/>
        <end position="267"/>
    </location>
</feature>
<feature type="domain" description="CTCK" evidence="3">
    <location>
        <begin position="162"/>
        <end position="246"/>
    </location>
</feature>
<feature type="region of interest" description="Disordered" evidence="4">
    <location>
        <begin position="19"/>
        <end position="52"/>
    </location>
</feature>
<feature type="region of interest" description="Disordered" evidence="4">
    <location>
        <begin position="87"/>
        <end position="113"/>
    </location>
</feature>
<feature type="compositionally biased region" description="Basic and acidic residues" evidence="4">
    <location>
        <begin position="88"/>
        <end position="101"/>
    </location>
</feature>
<feature type="glycosylation site" description="N-linked (GlcNAc...) asparagine" evidence="2">
    <location>
        <position position="26"/>
    </location>
</feature>
<feature type="glycosylation site" description="N-linked (GlcNAc...) asparagine" evidence="2">
    <location>
        <position position="222"/>
    </location>
</feature>
<feature type="disulfide bond" evidence="3">
    <location>
        <begin position="162"/>
        <end position="209"/>
    </location>
</feature>
<feature type="disulfide bond" evidence="3">
    <location>
        <begin position="176"/>
        <end position="223"/>
    </location>
</feature>
<feature type="disulfide bond" evidence="3">
    <location>
        <begin position="186"/>
        <end position="239"/>
    </location>
</feature>
<feature type="disulfide bond" evidence="3">
    <location>
        <begin position="190"/>
        <end position="241"/>
    </location>
</feature>
<feature type="sequence variant" id="VAR_021591" description="In dbSNP:rs10115703." evidence="6">
    <original>R</original>
    <variation>W</variation>
    <location>
        <position position="19"/>
    </location>
</feature>
<feature type="sequence variant" id="VAR_021592" description="In dbSNP:rs3747532." evidence="6">
    <original>A</original>
    <variation>G</variation>
    <location>
        <position position="65"/>
    </location>
</feature>
<feature type="sequence variant" id="VAR_021593" description="In dbSNP:rs7036635." evidence="6">
    <original>V</original>
    <variation>I</variation>
    <location>
        <position position="179"/>
    </location>
</feature>
<feature type="sequence conflict" description="In Ref. 4; AAH69503." evidence="7" ref="4">
    <original>F</original>
    <variation>L</variation>
    <location>
        <position position="57"/>
    </location>
</feature>
<feature type="sequence conflict" description="In Ref. 4; AAH69405." evidence="7" ref="4">
    <original>L</original>
    <variation>V</variation>
    <location>
        <position position="221"/>
    </location>
</feature>
<name>CER1_HUMAN</name>
<sequence>MHLLLFQLLVLLPLGKTTRHQDGRQNQSSLSPVLLPRNQRELPTGNHEEAEEKPDLFVAVPHLVATSPAGEGQRQREKMLSRFGRFWKKPEREMHPSRDSDSEPFPPGTQSLIQPIDGMKMEKSPLREEAKKFWHHFMFRKTPASQGVILPIKSHEVHWETCRTVPFSQTITHEGCEKVVVQNNLCFGKCGSVHFPGAAQHSHTSCSHCLPAKFTTMHLPLNCTELSSVIKVVMLVEECQCKVKTEHEDGHILHAGSQDSFIPGVSA</sequence>
<comment type="function">
    <text evidence="1">Cytokine that may play a role in anterior neural induction and somite formation during embryogenesis in part through a BMP-inhibitory mechanism. Can regulate Nodal signaling during gastrulation as well as the formation and patterning of the primitive streak (By similarity).</text>
</comment>
<comment type="subunit">
    <text evidence="1">Forms monomers and predominantly dimers.</text>
</comment>
<comment type="subcellular location">
    <subcellularLocation>
        <location evidence="7">Secreted</location>
    </subcellularLocation>
</comment>
<comment type="PTM">
    <text evidence="1">N-glycosylated.</text>
</comment>
<comment type="similarity">
    <text evidence="7">Belongs to the DAN family.</text>
</comment>
<comment type="sequence caution" evidence="7">
    <conflict type="erroneous termination">
        <sequence resource="EMBL-CDS" id="AAH69503"/>
    </conflict>
    <text>Truncated C-terminus.</text>
</comment>
<proteinExistence type="evidence at protein level"/>
<accession>O95813</accession>
<accession>Q6ISJ1</accession>
<accession>Q6ISJ6</accession>
<accession>Q6ISQ2</accession>
<accession>Q6ISS1</accession>